<organism>
    <name type="scientific">Aliivibrio salmonicida (strain LFI1238)</name>
    <name type="common">Vibrio salmonicida (strain LFI1238)</name>
    <dbReference type="NCBI Taxonomy" id="316275"/>
    <lineage>
        <taxon>Bacteria</taxon>
        <taxon>Pseudomonadati</taxon>
        <taxon>Pseudomonadota</taxon>
        <taxon>Gammaproteobacteria</taxon>
        <taxon>Vibrionales</taxon>
        <taxon>Vibrionaceae</taxon>
        <taxon>Aliivibrio</taxon>
    </lineage>
</organism>
<keyword id="KW-0067">ATP-binding</keyword>
<keyword id="KW-0436">Ligase</keyword>
<keyword id="KW-0460">Magnesium</keyword>
<keyword id="KW-0479">Metal-binding</keyword>
<keyword id="KW-0520">NAD</keyword>
<keyword id="KW-0547">Nucleotide-binding</keyword>
<feature type="chain" id="PRO_1000098999" description="NH(3)-dependent NAD(+) synthetase">
    <location>
        <begin position="1"/>
        <end position="276"/>
    </location>
</feature>
<feature type="binding site" evidence="1">
    <location>
        <begin position="43"/>
        <end position="50"/>
    </location>
    <ligand>
        <name>ATP</name>
        <dbReference type="ChEBI" id="CHEBI:30616"/>
    </ligand>
</feature>
<feature type="binding site" evidence="1">
    <location>
        <position position="49"/>
    </location>
    <ligand>
        <name>Mg(2+)</name>
        <dbReference type="ChEBI" id="CHEBI:18420"/>
    </ligand>
</feature>
<feature type="binding site" evidence="1">
    <location>
        <position position="146"/>
    </location>
    <ligand>
        <name>deamido-NAD(+)</name>
        <dbReference type="ChEBI" id="CHEBI:58437"/>
    </ligand>
</feature>
<feature type="binding site" evidence="1">
    <location>
        <position position="166"/>
    </location>
    <ligand>
        <name>ATP</name>
        <dbReference type="ChEBI" id="CHEBI:30616"/>
    </ligand>
</feature>
<feature type="binding site" evidence="1">
    <location>
        <position position="171"/>
    </location>
    <ligand>
        <name>Mg(2+)</name>
        <dbReference type="ChEBI" id="CHEBI:18420"/>
    </ligand>
</feature>
<feature type="binding site" evidence="1">
    <location>
        <position position="179"/>
    </location>
    <ligand>
        <name>deamido-NAD(+)</name>
        <dbReference type="ChEBI" id="CHEBI:58437"/>
    </ligand>
</feature>
<feature type="binding site" evidence="1">
    <location>
        <position position="186"/>
    </location>
    <ligand>
        <name>deamido-NAD(+)</name>
        <dbReference type="ChEBI" id="CHEBI:58437"/>
    </ligand>
</feature>
<feature type="binding site" evidence="1">
    <location>
        <position position="195"/>
    </location>
    <ligand>
        <name>ATP</name>
        <dbReference type="ChEBI" id="CHEBI:30616"/>
    </ligand>
</feature>
<feature type="binding site" evidence="1">
    <location>
        <position position="217"/>
    </location>
    <ligand>
        <name>ATP</name>
        <dbReference type="ChEBI" id="CHEBI:30616"/>
    </ligand>
</feature>
<feature type="binding site" evidence="1">
    <location>
        <begin position="266"/>
        <end position="267"/>
    </location>
    <ligand>
        <name>deamido-NAD(+)</name>
        <dbReference type="ChEBI" id="CHEBI:58437"/>
    </ligand>
</feature>
<evidence type="ECO:0000255" key="1">
    <source>
        <dbReference type="HAMAP-Rule" id="MF_00193"/>
    </source>
</evidence>
<accession>B6ERM8</accession>
<comment type="function">
    <text evidence="1">Catalyzes the ATP-dependent amidation of deamido-NAD to form NAD. Uses ammonia as a nitrogen source.</text>
</comment>
<comment type="catalytic activity">
    <reaction evidence="1">
        <text>deamido-NAD(+) + NH4(+) + ATP = AMP + diphosphate + NAD(+) + H(+)</text>
        <dbReference type="Rhea" id="RHEA:21188"/>
        <dbReference type="ChEBI" id="CHEBI:15378"/>
        <dbReference type="ChEBI" id="CHEBI:28938"/>
        <dbReference type="ChEBI" id="CHEBI:30616"/>
        <dbReference type="ChEBI" id="CHEBI:33019"/>
        <dbReference type="ChEBI" id="CHEBI:57540"/>
        <dbReference type="ChEBI" id="CHEBI:58437"/>
        <dbReference type="ChEBI" id="CHEBI:456215"/>
        <dbReference type="EC" id="6.3.1.5"/>
    </reaction>
</comment>
<comment type="pathway">
    <text evidence="1">Cofactor biosynthesis; NAD(+) biosynthesis; NAD(+) from deamido-NAD(+) (ammonia route): step 1/1.</text>
</comment>
<comment type="subunit">
    <text evidence="1">Homodimer.</text>
</comment>
<comment type="similarity">
    <text evidence="1">Belongs to the NAD synthetase family.</text>
</comment>
<protein>
    <recommendedName>
        <fullName evidence="1">NH(3)-dependent NAD(+) synthetase</fullName>
        <ecNumber evidence="1">6.3.1.5</ecNumber>
    </recommendedName>
</protein>
<dbReference type="EC" id="6.3.1.5" evidence="1"/>
<dbReference type="EMBL" id="FM178380">
    <property type="protein sequence ID" value="CAQ81361.1"/>
    <property type="molecule type" value="Genomic_DNA"/>
</dbReference>
<dbReference type="RefSeq" id="WP_012551929.1">
    <property type="nucleotide sequence ID" value="NC_011313.1"/>
</dbReference>
<dbReference type="SMR" id="B6ERM8"/>
<dbReference type="KEGG" id="vsa:VSAL_II0607"/>
<dbReference type="eggNOG" id="COG0171">
    <property type="taxonomic scope" value="Bacteria"/>
</dbReference>
<dbReference type="HOGENOM" id="CLU_059327_3_0_6"/>
<dbReference type="UniPathway" id="UPA00253">
    <property type="reaction ID" value="UER00333"/>
</dbReference>
<dbReference type="Proteomes" id="UP000001730">
    <property type="component" value="Chromosome 2"/>
</dbReference>
<dbReference type="GO" id="GO:0005737">
    <property type="term" value="C:cytoplasm"/>
    <property type="evidence" value="ECO:0007669"/>
    <property type="project" value="InterPro"/>
</dbReference>
<dbReference type="GO" id="GO:0005524">
    <property type="term" value="F:ATP binding"/>
    <property type="evidence" value="ECO:0007669"/>
    <property type="project" value="UniProtKB-UniRule"/>
</dbReference>
<dbReference type="GO" id="GO:0004359">
    <property type="term" value="F:glutaminase activity"/>
    <property type="evidence" value="ECO:0007669"/>
    <property type="project" value="InterPro"/>
</dbReference>
<dbReference type="GO" id="GO:0046872">
    <property type="term" value="F:metal ion binding"/>
    <property type="evidence" value="ECO:0007669"/>
    <property type="project" value="UniProtKB-KW"/>
</dbReference>
<dbReference type="GO" id="GO:0003952">
    <property type="term" value="F:NAD+ synthase (glutamine-hydrolyzing) activity"/>
    <property type="evidence" value="ECO:0007669"/>
    <property type="project" value="InterPro"/>
</dbReference>
<dbReference type="GO" id="GO:0008795">
    <property type="term" value="F:NAD+ synthase activity"/>
    <property type="evidence" value="ECO:0007669"/>
    <property type="project" value="UniProtKB-UniRule"/>
</dbReference>
<dbReference type="GO" id="GO:0009435">
    <property type="term" value="P:NAD biosynthetic process"/>
    <property type="evidence" value="ECO:0007669"/>
    <property type="project" value="UniProtKB-UniRule"/>
</dbReference>
<dbReference type="CDD" id="cd00553">
    <property type="entry name" value="NAD_synthase"/>
    <property type="match status" value="1"/>
</dbReference>
<dbReference type="FunFam" id="3.40.50.620:FF:000015">
    <property type="entry name" value="NH(3)-dependent NAD(+) synthetase"/>
    <property type="match status" value="1"/>
</dbReference>
<dbReference type="Gene3D" id="3.40.50.620">
    <property type="entry name" value="HUPs"/>
    <property type="match status" value="1"/>
</dbReference>
<dbReference type="HAMAP" id="MF_00193">
    <property type="entry name" value="NadE_ammonia_dep"/>
    <property type="match status" value="1"/>
</dbReference>
<dbReference type="InterPro" id="IPR022310">
    <property type="entry name" value="NAD/GMP_synthase"/>
</dbReference>
<dbReference type="InterPro" id="IPR003694">
    <property type="entry name" value="NAD_synthase"/>
</dbReference>
<dbReference type="InterPro" id="IPR022926">
    <property type="entry name" value="NH(3)-dep_NAD(+)_synth"/>
</dbReference>
<dbReference type="InterPro" id="IPR014729">
    <property type="entry name" value="Rossmann-like_a/b/a_fold"/>
</dbReference>
<dbReference type="NCBIfam" id="TIGR00552">
    <property type="entry name" value="nadE"/>
    <property type="match status" value="1"/>
</dbReference>
<dbReference type="NCBIfam" id="NF001979">
    <property type="entry name" value="PRK00768.1"/>
    <property type="match status" value="1"/>
</dbReference>
<dbReference type="PANTHER" id="PTHR23090">
    <property type="entry name" value="NH 3 /GLUTAMINE-DEPENDENT NAD + SYNTHETASE"/>
    <property type="match status" value="1"/>
</dbReference>
<dbReference type="PANTHER" id="PTHR23090:SF7">
    <property type="entry name" value="NH(3)-DEPENDENT NAD(+) SYNTHETASE"/>
    <property type="match status" value="1"/>
</dbReference>
<dbReference type="Pfam" id="PF02540">
    <property type="entry name" value="NAD_synthase"/>
    <property type="match status" value="1"/>
</dbReference>
<dbReference type="SUPFAM" id="SSF52402">
    <property type="entry name" value="Adenine nucleotide alpha hydrolases-like"/>
    <property type="match status" value="1"/>
</dbReference>
<reference key="1">
    <citation type="journal article" date="2008" name="BMC Genomics">
        <title>The genome sequence of the fish pathogen Aliivibrio salmonicida strain LFI1238 shows extensive evidence of gene decay.</title>
        <authorList>
            <person name="Hjerde E."/>
            <person name="Lorentzen M.S."/>
            <person name="Holden M.T."/>
            <person name="Seeger K."/>
            <person name="Paulsen S."/>
            <person name="Bason N."/>
            <person name="Churcher C."/>
            <person name="Harris D."/>
            <person name="Norbertczak H."/>
            <person name="Quail M.A."/>
            <person name="Sanders S."/>
            <person name="Thurston S."/>
            <person name="Parkhill J."/>
            <person name="Willassen N.P."/>
            <person name="Thomson N.R."/>
        </authorList>
    </citation>
    <scope>NUCLEOTIDE SEQUENCE [LARGE SCALE GENOMIC DNA]</scope>
    <source>
        <strain>LFI1238</strain>
    </source>
</reference>
<sequence length="276" mass="30256">MQKQIVEEMKVKVSIDPLSEIQRRVDFIKSTLTQSGCKSLILGISGGVDSTTCGRLAQIAVNELNKESNSSDYQFIAVRLPYGIQKDEDEAQLALEFIKPTHSISINIKDGVDGLHKANHLGLAHTGLLPTANDKIDFVKGNVKARARMIAQYEVAGYVGGLVLGTDHSAENITGFYTKFGDGACDLAPLFGLNKRQVRDVAAELGAPEQLVKKVPTADLEELAPQKADEDALSVTYDEIDDFLEGKKIDTEAEARLIKIYQTSQHKRKPIPTIYD</sequence>
<gene>
    <name evidence="1" type="primary">nadE</name>
    <name type="ordered locus">VSAL_II0607</name>
</gene>
<proteinExistence type="inferred from homology"/>
<name>NADE_ALISL</name>